<gene>
    <name type="ordered locus">War-109</name>
</gene>
<protein>
    <recommendedName>
        <fullName evidence="2">DNA-directed RNA polymerase RPB1 homolog</fullName>
        <shortName evidence="3">RPB1 homolog</shortName>
        <ecNumber>2.7.7.6</ecNumber>
    </recommendedName>
</protein>
<name>RPB1_ASFWA</name>
<evidence type="ECO:0000250" key="1">
    <source>
        <dbReference type="UniProtKB" id="P24928"/>
    </source>
</evidence>
<evidence type="ECO:0000250" key="2">
    <source>
        <dbReference type="UniProtKB" id="P42486"/>
    </source>
</evidence>
<evidence type="ECO:0000305" key="3"/>
<feature type="chain" id="PRO_0000373087" description="DNA-directed RNA polymerase RPB1 homolog">
    <location>
        <begin position="1"/>
        <end position="1450"/>
    </location>
</feature>
<proteinExistence type="inferred from homology"/>
<dbReference type="EC" id="2.7.7.6"/>
<dbReference type="EMBL" id="AY261366">
    <property type="status" value="NOT_ANNOTATED_CDS"/>
    <property type="molecule type" value="Genomic_DNA"/>
</dbReference>
<dbReference type="SMR" id="P0C988"/>
<dbReference type="Proteomes" id="UP000000858">
    <property type="component" value="Segment"/>
</dbReference>
<dbReference type="GO" id="GO:0000428">
    <property type="term" value="C:DNA-directed RNA polymerase complex"/>
    <property type="evidence" value="ECO:0007669"/>
    <property type="project" value="UniProtKB-KW"/>
</dbReference>
<dbReference type="GO" id="GO:0044423">
    <property type="term" value="C:virion component"/>
    <property type="evidence" value="ECO:0007669"/>
    <property type="project" value="UniProtKB-KW"/>
</dbReference>
<dbReference type="GO" id="GO:0003677">
    <property type="term" value="F:DNA binding"/>
    <property type="evidence" value="ECO:0007669"/>
    <property type="project" value="InterPro"/>
</dbReference>
<dbReference type="GO" id="GO:0003899">
    <property type="term" value="F:DNA-directed RNA polymerase activity"/>
    <property type="evidence" value="ECO:0007669"/>
    <property type="project" value="UniProtKB-EC"/>
</dbReference>
<dbReference type="GO" id="GO:0006351">
    <property type="term" value="P:DNA-templated transcription"/>
    <property type="evidence" value="ECO:0007669"/>
    <property type="project" value="InterPro"/>
</dbReference>
<dbReference type="GO" id="GO:0019083">
    <property type="term" value="P:viral transcription"/>
    <property type="evidence" value="ECO:0007669"/>
    <property type="project" value="UniProtKB-KW"/>
</dbReference>
<dbReference type="Gene3D" id="1.10.132.30">
    <property type="match status" value="1"/>
</dbReference>
<dbReference type="Gene3D" id="2.40.40.20">
    <property type="match status" value="1"/>
</dbReference>
<dbReference type="Gene3D" id="3.30.1360.140">
    <property type="match status" value="1"/>
</dbReference>
<dbReference type="Gene3D" id="6.10.250.2940">
    <property type="match status" value="1"/>
</dbReference>
<dbReference type="Gene3D" id="3.30.1490.180">
    <property type="entry name" value="RNA polymerase ii"/>
    <property type="match status" value="1"/>
</dbReference>
<dbReference type="Gene3D" id="4.10.860.120">
    <property type="entry name" value="RNA polymerase II, clamp domain"/>
    <property type="match status" value="1"/>
</dbReference>
<dbReference type="Gene3D" id="1.10.274.100">
    <property type="entry name" value="RNA polymerase Rpb1, domain 3"/>
    <property type="match status" value="1"/>
</dbReference>
<dbReference type="InterPro" id="IPR045867">
    <property type="entry name" value="DNA-dir_RpoC_beta_prime"/>
</dbReference>
<dbReference type="InterPro" id="IPR000722">
    <property type="entry name" value="RNA_pol_asu"/>
</dbReference>
<dbReference type="InterPro" id="IPR006592">
    <property type="entry name" value="RNA_pol_N"/>
</dbReference>
<dbReference type="InterPro" id="IPR007080">
    <property type="entry name" value="RNA_pol_Rpb1_1"/>
</dbReference>
<dbReference type="InterPro" id="IPR007066">
    <property type="entry name" value="RNA_pol_Rpb1_3"/>
</dbReference>
<dbReference type="InterPro" id="IPR042102">
    <property type="entry name" value="RNA_pol_Rpb1_3_sf"/>
</dbReference>
<dbReference type="InterPro" id="IPR007083">
    <property type="entry name" value="RNA_pol_Rpb1_4"/>
</dbReference>
<dbReference type="InterPro" id="IPR007081">
    <property type="entry name" value="RNA_pol_Rpb1_5"/>
</dbReference>
<dbReference type="InterPro" id="IPR007073">
    <property type="entry name" value="RNA_pol_Rpb1_7"/>
</dbReference>
<dbReference type="InterPro" id="IPR038593">
    <property type="entry name" value="RNA_pol_Rpb1_7_sf"/>
</dbReference>
<dbReference type="InterPro" id="IPR044893">
    <property type="entry name" value="RNA_pol_Rpb1_clamp_domain"/>
</dbReference>
<dbReference type="InterPro" id="IPR038120">
    <property type="entry name" value="Rpb1_funnel_sf"/>
</dbReference>
<dbReference type="PANTHER" id="PTHR19376">
    <property type="entry name" value="DNA-DIRECTED RNA POLYMERASE"/>
    <property type="match status" value="1"/>
</dbReference>
<dbReference type="PANTHER" id="PTHR19376:SF11">
    <property type="entry name" value="DNA-DIRECTED RNA POLYMERASE I SUBUNIT RPA1"/>
    <property type="match status" value="1"/>
</dbReference>
<dbReference type="Pfam" id="PF04997">
    <property type="entry name" value="RNA_pol_Rpb1_1"/>
    <property type="match status" value="1"/>
</dbReference>
<dbReference type="Pfam" id="PF00623">
    <property type="entry name" value="RNA_pol_Rpb1_2"/>
    <property type="match status" value="1"/>
</dbReference>
<dbReference type="Pfam" id="PF04983">
    <property type="entry name" value="RNA_pol_Rpb1_3"/>
    <property type="match status" value="1"/>
</dbReference>
<dbReference type="Pfam" id="PF05000">
    <property type="entry name" value="RNA_pol_Rpb1_4"/>
    <property type="match status" value="1"/>
</dbReference>
<dbReference type="Pfam" id="PF04998">
    <property type="entry name" value="RNA_pol_Rpb1_5"/>
    <property type="match status" value="1"/>
</dbReference>
<dbReference type="Pfam" id="PF04990">
    <property type="entry name" value="RNA_pol_Rpb1_7"/>
    <property type="match status" value="1"/>
</dbReference>
<dbReference type="SMART" id="SM00663">
    <property type="entry name" value="RPOLA_N"/>
    <property type="match status" value="1"/>
</dbReference>
<dbReference type="SUPFAM" id="SSF64484">
    <property type="entry name" value="beta and beta-prime subunits of DNA dependent RNA-polymerase"/>
    <property type="match status" value="1"/>
</dbReference>
<accession>P0C988</accession>
<sequence length="1450" mass="163822">MEAGYAEIAAVQFNIAGDNDHKRQGVMEVTISNLFEGTLPAEGGIYDARMGTTDHHYKCITCSHQRKQCMGHPGILQMHAPVLQPLFIAEIRRWLRVICLNCGAPIVDLKRYEHLIRPKRLIEAASSQTEGKQCYVCKAVHPKIIKDSEDYFTFWVDQQGKIDKLYPQIIREIFSRVTYDTVVKLGRSKNSHPEKLVLKAIQIPPISIRPGIRLGIGSGPQSFHDINNVIQYLVRKNLLIPKDLQIVRGQKIPLNIDRNLQTIQQLYYNFLLDSVSTTATQGGTGKRGIVMGARPAPSIMRRLPRKEGRIRKSLLGSQVWSISRSTICGNSDLHLDEVGYPISFARTLQVAETVQHYNINRLMPYFLNGKRQYPGCSRVYKQITQSVHDIEGLKQDFRLEVGDILYRDVVTGDVAFFNRQPSLERSSIGVHRIVVLENPKISTFQMNVSACAWYNADFDGDQMNLWVPWSVMSRVEAELLCSVRNWFISTKSSGPVNGQVQDSTVGSFLLTRTNTPMGKNVMNKLHAMGLFQTTQTDPPCFANYSPTDLLDGKSVVSMLLRQTPINYQRAPTWYSEVYAPYMHYNKQDISTQIRNGELIEGVLDKKAVGAGSSGGIYHLISRRYGPQQALKMIFATQQLALNYVRNAGFTVSTADMLLTPEAHQEVQEIINELLLESEEINNRLLHGDIMPPIGLTTHDFYEKLQLNALKFPDRILKPIMNSINPETNGLFQMVATGAKGSNPNMIHIMAGIGQIEINTQRIQPQFSFGRTLVYYPRFALEAQAYGFICNSYIAGLTSPEFIFGEMNGRFDLINKALSTSSTGYANRKAIFGLQSCIVDYYRRVSIDTRLVQQLYGEDGLDARQLETVRFETIMLSDQELEDKFKYTGIQSPLFEEEFSRLKKDRDKYRQIFLNVENFNFSQLLTDVRQVPVNVASIVKNILLSSASGVLPFDEKTILQKYTMVKTFCKNLPYVFINNIQERLQTPIPVYLKRAASLMRMLIRIELATVKTLNITCEQMSAILDLIRLQYTQSLINYGEAVGILAAQSVSEPLTQYMLDSHHRSVAGGTNKSGIVRPQEIFSAKPVEAEQSSEMLLRLKNPEVETNKTYAQEIANSIELITFERLILQWHLLYETYSSTKKNVMYPDFASDVEWMTDFLENHPLLQPPEDIANWCIRLELNKTTMILKSISLESIINSLRAKHPNTYIMHSVENTASGIPIIIRIYLRESAFRRSTNTRMATDEKIAVNVVDKLLNSTIRGIPGIKNANVVKLMRHRVDAQGKLVRLDNIYAIKTNGTNIFGAMLDDNIDPYTIVSSSIGDTMELYGIEAARQKIISEIRTVMGDKGPNHRHLLMYADLMTRTGQVTSLEKAGLNAREPSNVLLRMALSSPVQVLTDAAVDSAVNPIYGIAAPTLMGSVPRIGTMYSDIIMDEKYITENYKSVDSMIDML</sequence>
<reference key="1">
    <citation type="submission" date="2003-03" db="EMBL/GenBank/DDBJ databases">
        <title>African swine fever virus genomes.</title>
        <authorList>
            <person name="Kutish G.F."/>
            <person name="Rock D.L."/>
        </authorList>
    </citation>
    <scope>NUCLEOTIDE SEQUENCE [LARGE SCALE GENOMIC DNA]</scope>
</reference>
<organism>
    <name type="scientific">African swine fever virus (isolate Warthog/Namibia/Wart80/1980)</name>
    <name type="common">ASFV</name>
    <dbReference type="NCBI Taxonomy" id="561444"/>
    <lineage>
        <taxon>Viruses</taxon>
        <taxon>Varidnaviria</taxon>
        <taxon>Bamfordvirae</taxon>
        <taxon>Nucleocytoviricota</taxon>
        <taxon>Pokkesviricetes</taxon>
        <taxon>Asfuvirales</taxon>
        <taxon>Asfarviridae</taxon>
        <taxon>Asfivirus</taxon>
        <taxon>African swine fever virus</taxon>
    </lineage>
</organism>
<organismHost>
    <name type="scientific">Ornithodoros</name>
    <name type="common">relapsing fever ticks</name>
    <dbReference type="NCBI Taxonomy" id="6937"/>
</organismHost>
<organismHost>
    <name type="scientific">Phacochoerus aethiopicus</name>
    <name type="common">Warthog</name>
    <dbReference type="NCBI Taxonomy" id="85517"/>
</organismHost>
<organismHost>
    <name type="scientific">Phacochoerus africanus</name>
    <name type="common">Warthog</name>
    <dbReference type="NCBI Taxonomy" id="41426"/>
</organismHost>
<organismHost>
    <name type="scientific">Potamochoerus larvatus</name>
    <name type="common">Bushpig</name>
    <dbReference type="NCBI Taxonomy" id="273792"/>
</organismHost>
<organismHost>
    <name type="scientific">Sus scrofa</name>
    <name type="common">Pig</name>
    <dbReference type="NCBI Taxonomy" id="9823"/>
</organismHost>
<keyword id="KW-0240">DNA-directed RNA polymerase</keyword>
<keyword id="KW-0548">Nucleotidyltransferase</keyword>
<keyword id="KW-0804">Transcription</keyword>
<keyword id="KW-0808">Transferase</keyword>
<keyword id="KW-1195">Viral transcription</keyword>
<keyword id="KW-0946">Virion</keyword>
<comment type="function">
    <text evidence="1">Catalytic component of the DNA-directed RNA polymerase (RNAP) that catalyzes the transcription in the cytoplasm of viral DNA into RNA using the four ribonucleoside triphosphates as substrates (By similarity). Forms the polymerase active center together with RPB2 (By similarity). Part of the core element with the central large cleft, the clamp element that moves to open and close the cleft and the jaws that are thought to grab the incoming DNA template (By similarity).</text>
</comment>
<comment type="catalytic activity">
    <reaction>
        <text>RNA(n) + a ribonucleoside 5'-triphosphate = RNA(n+1) + diphosphate</text>
        <dbReference type="Rhea" id="RHEA:21248"/>
        <dbReference type="Rhea" id="RHEA-COMP:14527"/>
        <dbReference type="Rhea" id="RHEA-COMP:17342"/>
        <dbReference type="ChEBI" id="CHEBI:33019"/>
        <dbReference type="ChEBI" id="CHEBI:61557"/>
        <dbReference type="ChEBI" id="CHEBI:140395"/>
        <dbReference type="EC" id="2.7.7.6"/>
    </reaction>
</comment>
<comment type="subunit">
    <text evidence="2">Part of the viral DNA-directed RNA polymerase that consists of 8 polII-like subunits (RPB1, RPB2, RPB3, RPB5, RPB6, RPB7, RPB9, RPB10), a capping enzyme and a termination factor.</text>
</comment>
<comment type="subcellular location">
    <subcellularLocation>
        <location>Virion</location>
    </subcellularLocation>
    <text evidence="2">Found in association with viral nucleoid.</text>
</comment>
<comment type="induction">
    <text evidence="3">Expressed in the late phase of the viral replicative cycle.</text>
</comment>
<comment type="domain">
    <text evidence="2">Lacks the typical C-terminal domain (CTD).</text>
</comment>
<comment type="similarity">
    <text evidence="3">Belongs to the RNA polymerase beta' chain family.</text>
</comment>